<protein>
    <recommendedName>
        <fullName evidence="1">Ribosomal RNA small subunit methyltransferase F</fullName>
        <ecNumber evidence="1">2.1.1.178</ecNumber>
    </recommendedName>
    <alternativeName>
        <fullName evidence="1">16S rRNA m5C1407 methyltransferase</fullName>
    </alternativeName>
    <alternativeName>
        <fullName evidence="1">rRNA (cytosine-C(5)-)-methyltransferase RsmF</fullName>
    </alternativeName>
</protein>
<dbReference type="EC" id="2.1.1.178" evidence="1"/>
<dbReference type="EMBL" id="AL513382">
    <property type="protein sequence ID" value="CAD05532.1"/>
    <property type="molecule type" value="Genomic_DNA"/>
</dbReference>
<dbReference type="EMBL" id="AE014613">
    <property type="protein sequence ID" value="AAO68695.1"/>
    <property type="molecule type" value="Genomic_DNA"/>
</dbReference>
<dbReference type="RefSeq" id="NP_456355.1">
    <property type="nucleotide sequence ID" value="NC_003198.1"/>
</dbReference>
<dbReference type="RefSeq" id="WP_010989184.1">
    <property type="nucleotide sequence ID" value="NZ_WSUR01000004.1"/>
</dbReference>
<dbReference type="SMR" id="Q8Z662"/>
<dbReference type="STRING" id="220341.gene:17585897"/>
<dbReference type="KEGG" id="stt:t1028"/>
<dbReference type="KEGG" id="sty:STY1981"/>
<dbReference type="PATRIC" id="fig|220341.7.peg.1998"/>
<dbReference type="eggNOG" id="COG0144">
    <property type="taxonomic scope" value="Bacteria"/>
</dbReference>
<dbReference type="eggNOG" id="COG3270">
    <property type="taxonomic scope" value="Bacteria"/>
</dbReference>
<dbReference type="HOGENOM" id="CLU_005316_6_2_6"/>
<dbReference type="OMA" id="EGMFRKN"/>
<dbReference type="Proteomes" id="UP000000541">
    <property type="component" value="Chromosome"/>
</dbReference>
<dbReference type="Proteomes" id="UP000002670">
    <property type="component" value="Chromosome"/>
</dbReference>
<dbReference type="GO" id="GO:0005737">
    <property type="term" value="C:cytoplasm"/>
    <property type="evidence" value="ECO:0007669"/>
    <property type="project" value="UniProtKB-SubCell"/>
</dbReference>
<dbReference type="GO" id="GO:0003723">
    <property type="term" value="F:RNA binding"/>
    <property type="evidence" value="ECO:0007669"/>
    <property type="project" value="UniProtKB-KW"/>
</dbReference>
<dbReference type="GO" id="GO:0009383">
    <property type="term" value="F:rRNA (cytosine-C5-)-methyltransferase activity"/>
    <property type="evidence" value="ECO:0007669"/>
    <property type="project" value="TreeGrafter"/>
</dbReference>
<dbReference type="GO" id="GO:0070475">
    <property type="term" value="P:rRNA base methylation"/>
    <property type="evidence" value="ECO:0007669"/>
    <property type="project" value="TreeGrafter"/>
</dbReference>
<dbReference type="CDD" id="cd02440">
    <property type="entry name" value="AdoMet_MTases"/>
    <property type="match status" value="1"/>
</dbReference>
<dbReference type="FunFam" id="3.10.450.720:FF:000001">
    <property type="entry name" value="Ribosomal RNA small subunit methyltransferase F"/>
    <property type="match status" value="1"/>
</dbReference>
<dbReference type="FunFam" id="3.40.50.150:FF:000079">
    <property type="entry name" value="Ribosomal RNA small subunit methyltransferase F"/>
    <property type="match status" value="1"/>
</dbReference>
<dbReference type="Gene3D" id="3.10.450.720">
    <property type="match status" value="1"/>
</dbReference>
<dbReference type="Gene3D" id="3.40.50.150">
    <property type="entry name" value="Vaccinia Virus protein VP39"/>
    <property type="match status" value="1"/>
</dbReference>
<dbReference type="HAMAP" id="MF_01579">
    <property type="entry name" value="16SrRNA_methyltr_F"/>
    <property type="match status" value="1"/>
</dbReference>
<dbReference type="InterPro" id="IPR031341">
    <property type="entry name" value="Methyltr_RsmF_N"/>
</dbReference>
<dbReference type="InterPro" id="IPR049560">
    <property type="entry name" value="MeTrfase_RsmB-F_NOP2_cat"/>
</dbReference>
<dbReference type="InterPro" id="IPR001678">
    <property type="entry name" value="MeTrfase_RsmB-F_NOP2_dom"/>
</dbReference>
<dbReference type="InterPro" id="IPR027391">
    <property type="entry name" value="Nol1_Nop2_Fmu_2"/>
</dbReference>
<dbReference type="InterPro" id="IPR011023">
    <property type="entry name" value="Nop2p"/>
</dbReference>
<dbReference type="InterPro" id="IPR023267">
    <property type="entry name" value="RCMT"/>
</dbReference>
<dbReference type="InterPro" id="IPR023545">
    <property type="entry name" value="rRNA_ssu_MeTfrase_F"/>
</dbReference>
<dbReference type="InterPro" id="IPR018314">
    <property type="entry name" value="RsmB/NOL1/NOP2-like_CS"/>
</dbReference>
<dbReference type="InterPro" id="IPR029063">
    <property type="entry name" value="SAM-dependent_MTases_sf"/>
</dbReference>
<dbReference type="InterPro" id="IPR048457">
    <property type="entry name" value="YebU_pre-PUA_dom"/>
</dbReference>
<dbReference type="NCBIfam" id="TIGR00446">
    <property type="entry name" value="nop2p"/>
    <property type="match status" value="1"/>
</dbReference>
<dbReference type="NCBIfam" id="NF008898">
    <property type="entry name" value="PRK11933.1"/>
    <property type="match status" value="1"/>
</dbReference>
<dbReference type="PANTHER" id="PTHR22807:SF30">
    <property type="entry name" value="28S RRNA (CYTOSINE(4447)-C(5))-METHYLTRANSFERASE-RELATED"/>
    <property type="match status" value="1"/>
</dbReference>
<dbReference type="PANTHER" id="PTHR22807">
    <property type="entry name" value="NOP2 YEAST -RELATED NOL1/NOP2/FMU SUN DOMAIN-CONTAINING"/>
    <property type="match status" value="1"/>
</dbReference>
<dbReference type="Pfam" id="PF01189">
    <property type="entry name" value="Methyltr_RsmB-F"/>
    <property type="match status" value="1"/>
</dbReference>
<dbReference type="Pfam" id="PF17125">
    <property type="entry name" value="Methyltr_RsmF_N"/>
    <property type="match status" value="1"/>
</dbReference>
<dbReference type="Pfam" id="PF13636">
    <property type="entry name" value="Methyltranf_PUA"/>
    <property type="match status" value="1"/>
</dbReference>
<dbReference type="Pfam" id="PF21150">
    <property type="entry name" value="YebU_pre-PUA_dom"/>
    <property type="match status" value="1"/>
</dbReference>
<dbReference type="PRINTS" id="PR02008">
    <property type="entry name" value="RCMTFAMILY"/>
</dbReference>
<dbReference type="SUPFAM" id="SSF53335">
    <property type="entry name" value="S-adenosyl-L-methionine-dependent methyltransferases"/>
    <property type="match status" value="1"/>
</dbReference>
<dbReference type="PROSITE" id="PS01153">
    <property type="entry name" value="NOL1_NOP2_SUN"/>
    <property type="match status" value="1"/>
</dbReference>
<dbReference type="PROSITE" id="PS51686">
    <property type="entry name" value="SAM_MT_RSMB_NOP"/>
    <property type="match status" value="1"/>
</dbReference>
<feature type="chain" id="PRO_0000285007" description="Ribosomal RNA small subunit methyltransferase F">
    <location>
        <begin position="1"/>
        <end position="479"/>
    </location>
</feature>
<feature type="active site" description="Nucleophile" evidence="1">
    <location>
        <position position="247"/>
    </location>
</feature>
<feature type="binding site" evidence="1">
    <location>
        <begin position="125"/>
        <end position="131"/>
    </location>
    <ligand>
        <name>S-adenosyl-L-methionine</name>
        <dbReference type="ChEBI" id="CHEBI:59789"/>
    </ligand>
</feature>
<feature type="binding site" evidence="1">
    <location>
        <position position="149"/>
    </location>
    <ligand>
        <name>S-adenosyl-L-methionine</name>
        <dbReference type="ChEBI" id="CHEBI:59789"/>
    </ligand>
</feature>
<feature type="binding site" evidence="1">
    <location>
        <position position="176"/>
    </location>
    <ligand>
        <name>S-adenosyl-L-methionine</name>
        <dbReference type="ChEBI" id="CHEBI:59789"/>
    </ligand>
</feature>
<feature type="binding site" evidence="1">
    <location>
        <position position="194"/>
    </location>
    <ligand>
        <name>S-adenosyl-L-methionine</name>
        <dbReference type="ChEBI" id="CHEBI:59789"/>
    </ligand>
</feature>
<comment type="function">
    <text evidence="1">Specifically methylates the cytosine at position 1407 (m5C1407) of 16S rRNA.</text>
</comment>
<comment type="catalytic activity">
    <reaction evidence="1">
        <text>cytidine(1407) in 16S rRNA + S-adenosyl-L-methionine = 5-methylcytidine(1407) in 16S rRNA + S-adenosyl-L-homocysteine + H(+)</text>
        <dbReference type="Rhea" id="RHEA:42756"/>
        <dbReference type="Rhea" id="RHEA-COMP:10223"/>
        <dbReference type="Rhea" id="RHEA-COMP:10224"/>
        <dbReference type="ChEBI" id="CHEBI:15378"/>
        <dbReference type="ChEBI" id="CHEBI:57856"/>
        <dbReference type="ChEBI" id="CHEBI:59789"/>
        <dbReference type="ChEBI" id="CHEBI:74483"/>
        <dbReference type="ChEBI" id="CHEBI:82748"/>
        <dbReference type="EC" id="2.1.1.178"/>
    </reaction>
</comment>
<comment type="subcellular location">
    <subcellularLocation>
        <location evidence="1">Cytoplasm</location>
    </subcellularLocation>
</comment>
<comment type="similarity">
    <text evidence="1">Belongs to the class I-like SAM-binding methyltransferase superfamily. RsmB/NOP family.</text>
</comment>
<name>RSMF_SALTI</name>
<evidence type="ECO:0000255" key="1">
    <source>
        <dbReference type="HAMAP-Rule" id="MF_01579"/>
    </source>
</evidence>
<accession>Q8Z662</accession>
<accession>Q7CAH6</accession>
<proteinExistence type="inferred from homology"/>
<sequence length="479" mass="53258">MAQHAVYFPDAFLTQMREAMPSTLSFDEFISACQRPLRRSIRINTLKISVADFLALIAPYGWSLTPIPWCHEGFWIERDDEEALPLGSTAEHLSGLFYIQEASSMLPVAALFADDNHPQRVMDMAAAPGSKTTQIAARMGNRGAILANEFSASRVKVLHANISRCGIANTALTHFDGRVFGAALPEMFDAILLDAPCSGEGVVRKDPDALKNWSPESNLDIAATQRELLDSAFHALRPGGTLVYSTCTLNRQENEAVCLWLKETYADAVEFLPLGDLFPDADRALTPEGFLHVFPQIYDCEGFFVARLRKMSSLPAMPAPGYKVGAFPFTSLKGREALNVTQAANAVGLLWDENLHLWQREKEVWLFPAEIESLIGKVRFSRLGIKLAESHNKGYRWQHEATIALACPTHAHAFELSVQEAEEWYRGRDIYPQTPPAADDVLVTFQHQPLGLAKRIGARIKNSYPRELVRDGKLFTGNS</sequence>
<keyword id="KW-0963">Cytoplasm</keyword>
<keyword id="KW-0489">Methyltransferase</keyword>
<keyword id="KW-0694">RNA-binding</keyword>
<keyword id="KW-0698">rRNA processing</keyword>
<keyword id="KW-0949">S-adenosyl-L-methionine</keyword>
<keyword id="KW-0808">Transferase</keyword>
<organism>
    <name type="scientific">Salmonella typhi</name>
    <dbReference type="NCBI Taxonomy" id="90370"/>
    <lineage>
        <taxon>Bacteria</taxon>
        <taxon>Pseudomonadati</taxon>
        <taxon>Pseudomonadota</taxon>
        <taxon>Gammaproteobacteria</taxon>
        <taxon>Enterobacterales</taxon>
        <taxon>Enterobacteriaceae</taxon>
        <taxon>Salmonella</taxon>
    </lineage>
</organism>
<gene>
    <name evidence="1" type="primary">rsmF</name>
    <name type="ordered locus">STY1981</name>
    <name type="ordered locus">t1028</name>
</gene>
<reference key="1">
    <citation type="journal article" date="2001" name="Nature">
        <title>Complete genome sequence of a multiple drug resistant Salmonella enterica serovar Typhi CT18.</title>
        <authorList>
            <person name="Parkhill J."/>
            <person name="Dougan G."/>
            <person name="James K.D."/>
            <person name="Thomson N.R."/>
            <person name="Pickard D."/>
            <person name="Wain J."/>
            <person name="Churcher C.M."/>
            <person name="Mungall K.L."/>
            <person name="Bentley S.D."/>
            <person name="Holden M.T.G."/>
            <person name="Sebaihia M."/>
            <person name="Baker S."/>
            <person name="Basham D."/>
            <person name="Brooks K."/>
            <person name="Chillingworth T."/>
            <person name="Connerton P."/>
            <person name="Cronin A."/>
            <person name="Davis P."/>
            <person name="Davies R.M."/>
            <person name="Dowd L."/>
            <person name="White N."/>
            <person name="Farrar J."/>
            <person name="Feltwell T."/>
            <person name="Hamlin N."/>
            <person name="Haque A."/>
            <person name="Hien T.T."/>
            <person name="Holroyd S."/>
            <person name="Jagels K."/>
            <person name="Krogh A."/>
            <person name="Larsen T.S."/>
            <person name="Leather S."/>
            <person name="Moule S."/>
            <person name="O'Gaora P."/>
            <person name="Parry C."/>
            <person name="Quail M.A."/>
            <person name="Rutherford K.M."/>
            <person name="Simmonds M."/>
            <person name="Skelton J."/>
            <person name="Stevens K."/>
            <person name="Whitehead S."/>
            <person name="Barrell B.G."/>
        </authorList>
    </citation>
    <scope>NUCLEOTIDE SEQUENCE [LARGE SCALE GENOMIC DNA]</scope>
    <source>
        <strain>CT18</strain>
    </source>
</reference>
<reference key="2">
    <citation type="journal article" date="2003" name="J. Bacteriol.">
        <title>Comparative genomics of Salmonella enterica serovar Typhi strains Ty2 and CT18.</title>
        <authorList>
            <person name="Deng W."/>
            <person name="Liou S.-R."/>
            <person name="Plunkett G. III"/>
            <person name="Mayhew G.F."/>
            <person name="Rose D.J."/>
            <person name="Burland V."/>
            <person name="Kodoyianni V."/>
            <person name="Schwartz D.C."/>
            <person name="Blattner F.R."/>
        </authorList>
    </citation>
    <scope>NUCLEOTIDE SEQUENCE [LARGE SCALE GENOMIC DNA]</scope>
    <source>
        <strain>ATCC 700931 / Ty2</strain>
    </source>
</reference>